<protein>
    <recommendedName>
        <fullName>ESAT-6-like protein EsxB</fullName>
    </recommendedName>
    <alternativeName>
        <fullName>10 kDa culture filtrate antigen CFP-10</fullName>
    </alternativeName>
    <alternativeName>
        <fullName>Secreted antigenic protein MTSA-10</fullName>
    </alternativeName>
</protein>
<name>ESXB_MYCTO</name>
<organism>
    <name type="scientific">Mycobacterium tuberculosis (strain CDC 1551 / Oshkosh)</name>
    <dbReference type="NCBI Taxonomy" id="83331"/>
    <lineage>
        <taxon>Bacteria</taxon>
        <taxon>Bacillati</taxon>
        <taxon>Actinomycetota</taxon>
        <taxon>Actinomycetes</taxon>
        <taxon>Mycobacteriales</taxon>
        <taxon>Mycobacteriaceae</taxon>
        <taxon>Mycobacterium</taxon>
        <taxon>Mycobacterium tuberculosis complex</taxon>
    </lineage>
</organism>
<proteinExistence type="inferred from homology"/>
<reference key="1">
    <citation type="journal article" date="2002" name="J. Bacteriol.">
        <title>Whole-genome comparison of Mycobacterium tuberculosis clinical and laboratory strains.</title>
        <authorList>
            <person name="Fleischmann R.D."/>
            <person name="Alland D."/>
            <person name="Eisen J.A."/>
            <person name="Carpenter L."/>
            <person name="White O."/>
            <person name="Peterson J.D."/>
            <person name="DeBoy R.T."/>
            <person name="Dodson R.J."/>
            <person name="Gwinn M.L."/>
            <person name="Haft D.H."/>
            <person name="Hickey E.K."/>
            <person name="Kolonay J.F."/>
            <person name="Nelson W.C."/>
            <person name="Umayam L.A."/>
            <person name="Ermolaeva M.D."/>
            <person name="Salzberg S.L."/>
            <person name="Delcher A."/>
            <person name="Utterback T.R."/>
            <person name="Weidman J.F."/>
            <person name="Khouri H.M."/>
            <person name="Gill J."/>
            <person name="Mikula A."/>
            <person name="Bishai W."/>
            <person name="Jacobs W.R. Jr."/>
            <person name="Venter J.C."/>
            <person name="Fraser C.M."/>
        </authorList>
    </citation>
    <scope>NUCLEOTIDE SEQUENCE [LARGE SCALE GENOMIC DNA]</scope>
    <source>
        <strain>CDC 1551 / Oshkosh</strain>
    </source>
</reference>
<feature type="initiator methionine" description="Removed" evidence="1">
    <location>
        <position position="1"/>
    </location>
</feature>
<feature type="chain" id="PRO_0000427111" description="ESAT-6-like protein EsxB">
    <location>
        <begin position="2"/>
        <end position="100"/>
    </location>
</feature>
<feature type="region of interest" description="Disordered" evidence="4">
    <location>
        <begin position="81"/>
        <end position="100"/>
    </location>
</feature>
<feature type="coiled-coil region" evidence="3">
    <location>
        <begin position="49"/>
        <end position="86"/>
    </location>
</feature>
<feature type="compositionally biased region" description="Polar residues" evidence="4">
    <location>
        <begin position="91"/>
        <end position="100"/>
    </location>
</feature>
<accession>P9WNK4</accession>
<accession>L0TDT9</accession>
<accession>O69739</accession>
<accession>P0A566</accession>
<gene>
    <name type="primary">esxB</name>
    <name type="synonym">cfp10</name>
    <name type="synonym">lhp</name>
    <name type="synonym">mtsA10</name>
    <name type="ordered locus">MT3988</name>
</gene>
<dbReference type="EMBL" id="AE000516">
    <property type="protein sequence ID" value="AAK48356.1"/>
    <property type="molecule type" value="Genomic_DNA"/>
</dbReference>
<dbReference type="PIR" id="H70802">
    <property type="entry name" value="H70802"/>
</dbReference>
<dbReference type="RefSeq" id="WP_003399940.1">
    <property type="nucleotide sequence ID" value="NZ_KK341227.1"/>
</dbReference>
<dbReference type="BMRB" id="P9WNK4"/>
<dbReference type="SMR" id="P9WNK4"/>
<dbReference type="GeneID" id="45427878"/>
<dbReference type="KEGG" id="mtc:MT3988"/>
<dbReference type="PATRIC" id="fig|83331.31.peg.4290"/>
<dbReference type="HOGENOM" id="CLU_178469_0_0_11"/>
<dbReference type="Proteomes" id="UP000001020">
    <property type="component" value="Chromosome"/>
</dbReference>
<dbReference type="GO" id="GO:0005576">
    <property type="term" value="C:extracellular region"/>
    <property type="evidence" value="ECO:0007669"/>
    <property type="project" value="UniProtKB-SubCell"/>
</dbReference>
<dbReference type="GO" id="GO:0141104">
    <property type="term" value="P:symbiont-mediated activation of host G protein-coupled receptor signal transduction"/>
    <property type="evidence" value="ECO:0000269"/>
    <property type="project" value="SigSci"/>
</dbReference>
<dbReference type="FunFam" id="1.10.287.1060:FF:000008">
    <property type="entry name" value="ESAT-6-like protein"/>
    <property type="match status" value="1"/>
</dbReference>
<dbReference type="Gene3D" id="1.10.287.1060">
    <property type="entry name" value="ESAT-6-like"/>
    <property type="match status" value="1"/>
</dbReference>
<dbReference type="InterPro" id="IPR036689">
    <property type="entry name" value="ESAT-6-like_sf"/>
</dbReference>
<dbReference type="InterPro" id="IPR010310">
    <property type="entry name" value="T7SS_ESAT-6-like"/>
</dbReference>
<dbReference type="NCBIfam" id="TIGR03930">
    <property type="entry name" value="WXG100_ESAT6"/>
    <property type="match status" value="1"/>
</dbReference>
<dbReference type="Pfam" id="PF06013">
    <property type="entry name" value="WXG100"/>
    <property type="match status" value="1"/>
</dbReference>
<dbReference type="SUPFAM" id="SSF140453">
    <property type="entry name" value="EsxAB dimer-like"/>
    <property type="match status" value="1"/>
</dbReference>
<keyword id="KW-0143">Chaperone</keyword>
<keyword id="KW-0175">Coiled coil</keyword>
<keyword id="KW-1185">Reference proteome</keyword>
<keyword id="KW-0964">Secreted</keyword>
<keyword id="KW-0843">Virulence</keyword>
<sequence length="100" mass="10794">MAEMKTDAATLAQEAGNFERISGDLKTQIDQVESTAGSLQGQWRGAAGTAAQAAVVRFQEAANKQKQELDEISTNIRQAGVQYSRADEEQQQALSSQMGF</sequence>
<evidence type="ECO:0000250" key="1"/>
<evidence type="ECO:0000250" key="2">
    <source>
        <dbReference type="UniProtKB" id="P9WNK5"/>
    </source>
</evidence>
<evidence type="ECO:0000255" key="3"/>
<evidence type="ECO:0000256" key="4">
    <source>
        <dbReference type="SAM" id="MobiDB-lite"/>
    </source>
</evidence>
<evidence type="ECO:0000305" key="5"/>
<comment type="function">
    <text evidence="2">A secreted protein. Acts as a strong host T-cell antigen. Involved in translocation of bacteria from the host (human) phagolysosome to the host cytoplasm. Might serve as a chaperone to prevent uncontrolled membrane lysis by its partner EsxA.</text>
</comment>
<comment type="subunit">
    <text evidence="2">Forms a tight 1:1 complex with EsxA (ESAT-6).</text>
</comment>
<comment type="subcellular location">
    <subcellularLocation>
        <location evidence="2">Secreted</location>
    </subcellularLocation>
    <text evidence="2">Probably secreted via the ESX-1 / type VII secretion system (T7SS).</text>
</comment>
<comment type="similarity">
    <text evidence="5">Belongs to the WXG100 family. CFP-10 subfamily.</text>
</comment>